<comment type="function">
    <text evidence="1">Essential cell division protein. May link together the upstream cell division proteins, which are predominantly cytoplasmic, with the downstream cell division proteins, which are predominantly periplasmic.</text>
</comment>
<comment type="subunit">
    <text evidence="1">Part of a complex composed of FtsB, FtsL and FtsQ.</text>
</comment>
<comment type="subcellular location">
    <subcellularLocation>
        <location evidence="1">Cell inner membrane</location>
        <topology evidence="1">Single-pass type II membrane protein</topology>
    </subcellularLocation>
    <text evidence="1">Localizes to the division septum.</text>
</comment>
<comment type="similarity">
    <text evidence="1">Belongs to the FtsB family.</text>
</comment>
<gene>
    <name evidence="1" type="primary">ftsB</name>
    <name type="ordered locus">EcSMS35_2873</name>
</gene>
<reference key="1">
    <citation type="journal article" date="2008" name="J. Bacteriol.">
        <title>Insights into the environmental resistance gene pool from the genome sequence of the multidrug-resistant environmental isolate Escherichia coli SMS-3-5.</title>
        <authorList>
            <person name="Fricke W.F."/>
            <person name="Wright M.S."/>
            <person name="Lindell A.H."/>
            <person name="Harkins D.M."/>
            <person name="Baker-Austin C."/>
            <person name="Ravel J."/>
            <person name="Stepanauskas R."/>
        </authorList>
    </citation>
    <scope>NUCLEOTIDE SEQUENCE [LARGE SCALE GENOMIC DNA]</scope>
    <source>
        <strain>SMS-3-5 / SECEC</strain>
    </source>
</reference>
<accession>B1LQ68</accession>
<proteinExistence type="inferred from homology"/>
<keyword id="KW-0131">Cell cycle</keyword>
<keyword id="KW-0132">Cell division</keyword>
<keyword id="KW-0997">Cell inner membrane</keyword>
<keyword id="KW-1003">Cell membrane</keyword>
<keyword id="KW-0175">Coiled coil</keyword>
<keyword id="KW-0472">Membrane</keyword>
<keyword id="KW-0812">Transmembrane</keyword>
<keyword id="KW-1133">Transmembrane helix</keyword>
<evidence type="ECO:0000255" key="1">
    <source>
        <dbReference type="HAMAP-Rule" id="MF_00599"/>
    </source>
</evidence>
<sequence>MGKLTLLLLAILVWLQYSLWFGKNGIHDYTRVNDDVAAQQATNAKLKARNDQLFAEIDDLNGGQEALEERARNELSMTRPGETFYRLVPDASKRAQSAGQNNR</sequence>
<protein>
    <recommendedName>
        <fullName evidence="1">Cell division protein FtsB</fullName>
    </recommendedName>
</protein>
<name>FTSB_ECOSM</name>
<organism>
    <name type="scientific">Escherichia coli (strain SMS-3-5 / SECEC)</name>
    <dbReference type="NCBI Taxonomy" id="439855"/>
    <lineage>
        <taxon>Bacteria</taxon>
        <taxon>Pseudomonadati</taxon>
        <taxon>Pseudomonadota</taxon>
        <taxon>Gammaproteobacteria</taxon>
        <taxon>Enterobacterales</taxon>
        <taxon>Enterobacteriaceae</taxon>
        <taxon>Escherichia</taxon>
    </lineage>
</organism>
<dbReference type="EMBL" id="CP000970">
    <property type="protein sequence ID" value="ACB16489.1"/>
    <property type="molecule type" value="Genomic_DNA"/>
</dbReference>
<dbReference type="RefSeq" id="WP_000517476.1">
    <property type="nucleotide sequence ID" value="NC_010498.1"/>
</dbReference>
<dbReference type="SMR" id="B1LQ68"/>
<dbReference type="GeneID" id="93779258"/>
<dbReference type="KEGG" id="ecm:EcSMS35_2873"/>
<dbReference type="HOGENOM" id="CLU_134863_5_2_6"/>
<dbReference type="Proteomes" id="UP000007011">
    <property type="component" value="Chromosome"/>
</dbReference>
<dbReference type="GO" id="GO:0032153">
    <property type="term" value="C:cell division site"/>
    <property type="evidence" value="ECO:0007669"/>
    <property type="project" value="UniProtKB-UniRule"/>
</dbReference>
<dbReference type="GO" id="GO:0030428">
    <property type="term" value="C:cell septum"/>
    <property type="evidence" value="ECO:0007669"/>
    <property type="project" value="TreeGrafter"/>
</dbReference>
<dbReference type="GO" id="GO:0005886">
    <property type="term" value="C:plasma membrane"/>
    <property type="evidence" value="ECO:0007669"/>
    <property type="project" value="UniProtKB-SubCell"/>
</dbReference>
<dbReference type="GO" id="GO:0043093">
    <property type="term" value="P:FtsZ-dependent cytokinesis"/>
    <property type="evidence" value="ECO:0007669"/>
    <property type="project" value="UniProtKB-UniRule"/>
</dbReference>
<dbReference type="FunFam" id="1.20.5.400:FF:000001">
    <property type="entry name" value="Cell division protein FtsB"/>
    <property type="match status" value="1"/>
</dbReference>
<dbReference type="Gene3D" id="1.20.5.400">
    <property type="match status" value="1"/>
</dbReference>
<dbReference type="HAMAP" id="MF_00599">
    <property type="entry name" value="FtsB"/>
    <property type="match status" value="1"/>
</dbReference>
<dbReference type="InterPro" id="IPR023081">
    <property type="entry name" value="Cell_div_FtsB"/>
</dbReference>
<dbReference type="InterPro" id="IPR007060">
    <property type="entry name" value="FtsL/DivIC"/>
</dbReference>
<dbReference type="NCBIfam" id="NF002058">
    <property type="entry name" value="PRK00888.1"/>
    <property type="match status" value="1"/>
</dbReference>
<dbReference type="PANTHER" id="PTHR37485">
    <property type="entry name" value="CELL DIVISION PROTEIN FTSB"/>
    <property type="match status" value="1"/>
</dbReference>
<dbReference type="PANTHER" id="PTHR37485:SF1">
    <property type="entry name" value="CELL DIVISION PROTEIN FTSB"/>
    <property type="match status" value="1"/>
</dbReference>
<dbReference type="Pfam" id="PF04977">
    <property type="entry name" value="DivIC"/>
    <property type="match status" value="1"/>
</dbReference>
<feature type="chain" id="PRO_1000129929" description="Cell division protein FtsB">
    <location>
        <begin position="1"/>
        <end position="103"/>
    </location>
</feature>
<feature type="topological domain" description="Cytoplasmic" evidence="1">
    <location>
        <begin position="1"/>
        <end position="3"/>
    </location>
</feature>
<feature type="transmembrane region" description="Helical" evidence="1">
    <location>
        <begin position="4"/>
        <end position="21"/>
    </location>
</feature>
<feature type="topological domain" description="Periplasmic" evidence="1">
    <location>
        <begin position="22"/>
        <end position="103"/>
    </location>
</feature>
<feature type="coiled-coil region" evidence="1">
    <location>
        <begin position="31"/>
        <end position="71"/>
    </location>
</feature>